<evidence type="ECO:0000255" key="1">
    <source>
        <dbReference type="HAMAP-Rule" id="MF_00744"/>
    </source>
</evidence>
<dbReference type="EMBL" id="CP000247">
    <property type="protein sequence ID" value="ABG72103.1"/>
    <property type="molecule type" value="Genomic_DNA"/>
</dbReference>
<dbReference type="RefSeq" id="WP_000852812.1">
    <property type="nucleotide sequence ID" value="NC_008253.1"/>
</dbReference>
<dbReference type="SMR" id="Q0TAC6"/>
<dbReference type="GeneID" id="93777954"/>
<dbReference type="KEGG" id="ecp:ECP_4147"/>
<dbReference type="HOGENOM" id="CLU_142318_0_0_6"/>
<dbReference type="Proteomes" id="UP000009182">
    <property type="component" value="Chromosome"/>
</dbReference>
<dbReference type="GO" id="GO:0005737">
    <property type="term" value="C:cytoplasm"/>
    <property type="evidence" value="ECO:0007669"/>
    <property type="project" value="UniProtKB-SubCell"/>
</dbReference>
<dbReference type="GO" id="GO:0003677">
    <property type="term" value="F:DNA binding"/>
    <property type="evidence" value="ECO:0007669"/>
    <property type="project" value="UniProtKB-KW"/>
</dbReference>
<dbReference type="GO" id="GO:0003700">
    <property type="term" value="F:DNA-binding transcription factor activity"/>
    <property type="evidence" value="ECO:0007669"/>
    <property type="project" value="InterPro"/>
</dbReference>
<dbReference type="GO" id="GO:0009086">
    <property type="term" value="P:methionine biosynthetic process"/>
    <property type="evidence" value="ECO:0007669"/>
    <property type="project" value="UniProtKB-UniRule"/>
</dbReference>
<dbReference type="GO" id="GO:0045892">
    <property type="term" value="P:negative regulation of DNA-templated transcription"/>
    <property type="evidence" value="ECO:0007669"/>
    <property type="project" value="UniProtKB-UniRule"/>
</dbReference>
<dbReference type="CDD" id="cd00490">
    <property type="entry name" value="Met_repressor_MetJ"/>
    <property type="match status" value="1"/>
</dbReference>
<dbReference type="FunFam" id="1.10.140.10:FF:000001">
    <property type="entry name" value="Met repressor"/>
    <property type="match status" value="1"/>
</dbReference>
<dbReference type="Gene3D" id="1.10.140.10">
    <property type="entry name" value="MET Apo-Repressor, subunit A"/>
    <property type="match status" value="1"/>
</dbReference>
<dbReference type="HAMAP" id="MF_00744">
    <property type="entry name" value="MetJ"/>
    <property type="match status" value="1"/>
</dbReference>
<dbReference type="InterPro" id="IPR002084">
    <property type="entry name" value="Met_repressor_MetJ"/>
</dbReference>
<dbReference type="InterPro" id="IPR023453">
    <property type="entry name" value="Met_repressor_MetJ_dom_sf"/>
</dbReference>
<dbReference type="InterPro" id="IPR010985">
    <property type="entry name" value="Ribbon_hlx_hlx"/>
</dbReference>
<dbReference type="NCBIfam" id="NF003622">
    <property type="entry name" value="PRK05264.1"/>
    <property type="match status" value="1"/>
</dbReference>
<dbReference type="Pfam" id="PF01340">
    <property type="entry name" value="MetJ"/>
    <property type="match status" value="1"/>
</dbReference>
<dbReference type="SUPFAM" id="SSF47598">
    <property type="entry name" value="Ribbon-helix-helix"/>
    <property type="match status" value="1"/>
</dbReference>
<accession>Q0TAC6</accession>
<feature type="chain" id="PRO_1000046487" description="Met repressor">
    <location>
        <begin position="1"/>
        <end position="105"/>
    </location>
</feature>
<comment type="function">
    <text evidence="1">This regulatory protein, when combined with SAM (S-adenosylmethionine) represses the expression of the methionine regulon and of enzymes involved in SAM synthesis.</text>
</comment>
<comment type="subunit">
    <text evidence="1">Homodimer.</text>
</comment>
<comment type="subcellular location">
    <subcellularLocation>
        <location evidence="1">Cytoplasm</location>
    </subcellularLocation>
</comment>
<comment type="domain">
    <text>Does not bind DNA by a helix-turn-helix motif.</text>
</comment>
<comment type="similarity">
    <text evidence="1">Belongs to the MetJ family.</text>
</comment>
<organism>
    <name type="scientific">Escherichia coli O6:K15:H31 (strain 536 / UPEC)</name>
    <dbReference type="NCBI Taxonomy" id="362663"/>
    <lineage>
        <taxon>Bacteria</taxon>
        <taxon>Pseudomonadati</taxon>
        <taxon>Pseudomonadota</taxon>
        <taxon>Gammaproteobacteria</taxon>
        <taxon>Enterobacterales</taxon>
        <taxon>Enterobacteriaceae</taxon>
        <taxon>Escherichia</taxon>
    </lineage>
</organism>
<protein>
    <recommendedName>
        <fullName evidence="1">Met repressor</fullName>
    </recommendedName>
    <alternativeName>
        <fullName evidence="1">Met regulon regulatory protein MetJ</fullName>
    </alternativeName>
</protein>
<reference key="1">
    <citation type="journal article" date="2006" name="Mol. Microbiol.">
        <title>Role of pathogenicity island-associated integrases in the genome plasticity of uropathogenic Escherichia coli strain 536.</title>
        <authorList>
            <person name="Hochhut B."/>
            <person name="Wilde C."/>
            <person name="Balling G."/>
            <person name="Middendorf B."/>
            <person name="Dobrindt U."/>
            <person name="Brzuszkiewicz E."/>
            <person name="Gottschalk G."/>
            <person name="Carniel E."/>
            <person name="Hacker J."/>
        </authorList>
    </citation>
    <scope>NUCLEOTIDE SEQUENCE [LARGE SCALE GENOMIC DNA]</scope>
    <source>
        <strain>536 / UPEC</strain>
    </source>
</reference>
<sequence>MAEWSGEYISPYAEHGKKSEQVKKITVSIPLKVLKILTDERTRRQVNNLRHATNSELLCEAFLHAFTGQPLPDDADLRKERSDEIPEAAKEIMREMGINPETWEY</sequence>
<name>METJ_ECOL5</name>
<gene>
    <name evidence="1" type="primary">metJ</name>
    <name type="ordered locus">ECP_4147</name>
</gene>
<proteinExistence type="inferred from homology"/>
<keyword id="KW-0028">Amino-acid biosynthesis</keyword>
<keyword id="KW-0963">Cytoplasm</keyword>
<keyword id="KW-0238">DNA-binding</keyword>
<keyword id="KW-0486">Methionine biosynthesis</keyword>
<keyword id="KW-0678">Repressor</keyword>
<keyword id="KW-0804">Transcription</keyword>
<keyword id="KW-0805">Transcription regulation</keyword>